<evidence type="ECO:0000255" key="1">
    <source>
        <dbReference type="HAMAP-Rule" id="MF_00715"/>
    </source>
</evidence>
<gene>
    <name evidence="1" type="primary">slyX</name>
    <name type="ordered locus">PSPTO_3985</name>
</gene>
<proteinExistence type="inferred from homology"/>
<protein>
    <recommendedName>
        <fullName evidence="1">Protein SlyX homolog</fullName>
    </recommendedName>
</protein>
<sequence length="68" mass="8144">MNLEERVMELESRMAFQDDTIQALNDVLVKQRREFDHLQQQMAAMIKRQEEMGSQFDTFEEDAPPPHY</sequence>
<dbReference type="EMBL" id="AE016853">
    <property type="protein sequence ID" value="AAO57444.1"/>
    <property type="molecule type" value="Genomic_DNA"/>
</dbReference>
<dbReference type="RefSeq" id="NP_793749.1">
    <property type="nucleotide sequence ID" value="NC_004578.1"/>
</dbReference>
<dbReference type="RefSeq" id="WP_005766070.1">
    <property type="nucleotide sequence ID" value="NC_004578.1"/>
</dbReference>
<dbReference type="SMR" id="Q87Y27"/>
<dbReference type="STRING" id="223283.PSPTO_3985"/>
<dbReference type="GeneID" id="1185661"/>
<dbReference type="KEGG" id="pst:PSPTO_3985"/>
<dbReference type="PATRIC" id="fig|223283.9.peg.4086"/>
<dbReference type="eggNOG" id="COG2900">
    <property type="taxonomic scope" value="Bacteria"/>
</dbReference>
<dbReference type="HOGENOM" id="CLU_180796_4_1_6"/>
<dbReference type="OrthoDB" id="8606883at2"/>
<dbReference type="PhylomeDB" id="Q87Y27"/>
<dbReference type="Proteomes" id="UP000002515">
    <property type="component" value="Chromosome"/>
</dbReference>
<dbReference type="Gene3D" id="1.20.5.300">
    <property type="match status" value="1"/>
</dbReference>
<dbReference type="HAMAP" id="MF_00715">
    <property type="entry name" value="SlyX"/>
    <property type="match status" value="1"/>
</dbReference>
<dbReference type="InterPro" id="IPR007236">
    <property type="entry name" value="SlyX"/>
</dbReference>
<dbReference type="NCBIfam" id="NF001421">
    <property type="entry name" value="PRK00295.1"/>
    <property type="match status" value="1"/>
</dbReference>
<dbReference type="PANTHER" id="PTHR36508">
    <property type="entry name" value="PROTEIN SLYX"/>
    <property type="match status" value="1"/>
</dbReference>
<dbReference type="PANTHER" id="PTHR36508:SF1">
    <property type="entry name" value="PROTEIN SLYX"/>
    <property type="match status" value="1"/>
</dbReference>
<dbReference type="Pfam" id="PF04102">
    <property type="entry name" value="SlyX"/>
    <property type="match status" value="1"/>
</dbReference>
<organism>
    <name type="scientific">Pseudomonas syringae pv. tomato (strain ATCC BAA-871 / DC3000)</name>
    <dbReference type="NCBI Taxonomy" id="223283"/>
    <lineage>
        <taxon>Bacteria</taxon>
        <taxon>Pseudomonadati</taxon>
        <taxon>Pseudomonadota</taxon>
        <taxon>Gammaproteobacteria</taxon>
        <taxon>Pseudomonadales</taxon>
        <taxon>Pseudomonadaceae</taxon>
        <taxon>Pseudomonas</taxon>
    </lineage>
</organism>
<comment type="similarity">
    <text evidence="1">Belongs to the SlyX family.</text>
</comment>
<reference key="1">
    <citation type="journal article" date="2003" name="Proc. Natl. Acad. Sci. U.S.A.">
        <title>The complete genome sequence of the Arabidopsis and tomato pathogen Pseudomonas syringae pv. tomato DC3000.</title>
        <authorList>
            <person name="Buell C.R."/>
            <person name="Joardar V."/>
            <person name="Lindeberg M."/>
            <person name="Selengut J."/>
            <person name="Paulsen I.T."/>
            <person name="Gwinn M.L."/>
            <person name="Dodson R.J."/>
            <person name="DeBoy R.T."/>
            <person name="Durkin A.S."/>
            <person name="Kolonay J.F."/>
            <person name="Madupu R."/>
            <person name="Daugherty S.C."/>
            <person name="Brinkac L.M."/>
            <person name="Beanan M.J."/>
            <person name="Haft D.H."/>
            <person name="Nelson W.C."/>
            <person name="Davidsen T.M."/>
            <person name="Zafar N."/>
            <person name="Zhou L."/>
            <person name="Liu J."/>
            <person name="Yuan Q."/>
            <person name="Khouri H.M."/>
            <person name="Fedorova N.B."/>
            <person name="Tran B."/>
            <person name="Russell D."/>
            <person name="Berry K.J."/>
            <person name="Utterback T.R."/>
            <person name="Van Aken S.E."/>
            <person name="Feldblyum T.V."/>
            <person name="D'Ascenzo M."/>
            <person name="Deng W.-L."/>
            <person name="Ramos A.R."/>
            <person name="Alfano J.R."/>
            <person name="Cartinhour S."/>
            <person name="Chatterjee A.K."/>
            <person name="Delaney T.P."/>
            <person name="Lazarowitz S.G."/>
            <person name="Martin G.B."/>
            <person name="Schneider D.J."/>
            <person name="Tang X."/>
            <person name="Bender C.L."/>
            <person name="White O."/>
            <person name="Fraser C.M."/>
            <person name="Collmer A."/>
        </authorList>
    </citation>
    <scope>NUCLEOTIDE SEQUENCE [LARGE SCALE GENOMIC DNA]</scope>
    <source>
        <strain>ATCC BAA-871 / DC3000</strain>
    </source>
</reference>
<feature type="chain" id="PRO_0000209209" description="Protein SlyX homolog">
    <location>
        <begin position="1"/>
        <end position="68"/>
    </location>
</feature>
<keyword id="KW-1185">Reference proteome</keyword>
<name>SLYX_PSESM</name>
<accession>Q87Y27</accession>